<proteinExistence type="inferred from homology"/>
<gene>
    <name evidence="1" type="primary">metK</name>
    <name type="ordered locus">Bcen2424_3081</name>
</gene>
<dbReference type="EC" id="2.5.1.6" evidence="1"/>
<dbReference type="EMBL" id="CP000458">
    <property type="protein sequence ID" value="ABK09829.1"/>
    <property type="molecule type" value="Genomic_DNA"/>
</dbReference>
<dbReference type="RefSeq" id="WP_011546455.1">
    <property type="nucleotide sequence ID" value="NC_008542.1"/>
</dbReference>
<dbReference type="SMR" id="A0KBF2"/>
<dbReference type="GeneID" id="83049879"/>
<dbReference type="KEGG" id="bch:Bcen2424_3081"/>
<dbReference type="HOGENOM" id="CLU_041802_1_1_4"/>
<dbReference type="UniPathway" id="UPA00315">
    <property type="reaction ID" value="UER00080"/>
</dbReference>
<dbReference type="GO" id="GO:0005737">
    <property type="term" value="C:cytoplasm"/>
    <property type="evidence" value="ECO:0007669"/>
    <property type="project" value="UniProtKB-SubCell"/>
</dbReference>
<dbReference type="GO" id="GO:0005524">
    <property type="term" value="F:ATP binding"/>
    <property type="evidence" value="ECO:0007669"/>
    <property type="project" value="UniProtKB-UniRule"/>
</dbReference>
<dbReference type="GO" id="GO:0000287">
    <property type="term" value="F:magnesium ion binding"/>
    <property type="evidence" value="ECO:0007669"/>
    <property type="project" value="UniProtKB-UniRule"/>
</dbReference>
<dbReference type="GO" id="GO:0004478">
    <property type="term" value="F:methionine adenosyltransferase activity"/>
    <property type="evidence" value="ECO:0007669"/>
    <property type="project" value="UniProtKB-UniRule"/>
</dbReference>
<dbReference type="GO" id="GO:0006730">
    <property type="term" value="P:one-carbon metabolic process"/>
    <property type="evidence" value="ECO:0007669"/>
    <property type="project" value="UniProtKB-KW"/>
</dbReference>
<dbReference type="GO" id="GO:0006556">
    <property type="term" value="P:S-adenosylmethionine biosynthetic process"/>
    <property type="evidence" value="ECO:0007669"/>
    <property type="project" value="UniProtKB-UniRule"/>
</dbReference>
<dbReference type="CDD" id="cd18079">
    <property type="entry name" value="S-AdoMet_synt"/>
    <property type="match status" value="1"/>
</dbReference>
<dbReference type="FunFam" id="3.30.300.10:FF:000003">
    <property type="entry name" value="S-adenosylmethionine synthase"/>
    <property type="match status" value="1"/>
</dbReference>
<dbReference type="FunFam" id="3.30.300.10:FF:000004">
    <property type="entry name" value="S-adenosylmethionine synthase"/>
    <property type="match status" value="1"/>
</dbReference>
<dbReference type="Gene3D" id="3.30.300.10">
    <property type="match status" value="3"/>
</dbReference>
<dbReference type="HAMAP" id="MF_00086">
    <property type="entry name" value="S_AdoMet_synth1"/>
    <property type="match status" value="1"/>
</dbReference>
<dbReference type="InterPro" id="IPR022631">
    <property type="entry name" value="ADOMET_SYNTHASE_CS"/>
</dbReference>
<dbReference type="InterPro" id="IPR022630">
    <property type="entry name" value="S-AdoMet_synt_C"/>
</dbReference>
<dbReference type="InterPro" id="IPR022629">
    <property type="entry name" value="S-AdoMet_synt_central"/>
</dbReference>
<dbReference type="InterPro" id="IPR022628">
    <property type="entry name" value="S-AdoMet_synt_N"/>
</dbReference>
<dbReference type="InterPro" id="IPR002133">
    <property type="entry name" value="S-AdoMet_synthetase"/>
</dbReference>
<dbReference type="InterPro" id="IPR022636">
    <property type="entry name" value="S-AdoMet_synthetase_sfam"/>
</dbReference>
<dbReference type="NCBIfam" id="TIGR01034">
    <property type="entry name" value="metK"/>
    <property type="match status" value="1"/>
</dbReference>
<dbReference type="PANTHER" id="PTHR11964">
    <property type="entry name" value="S-ADENOSYLMETHIONINE SYNTHETASE"/>
    <property type="match status" value="1"/>
</dbReference>
<dbReference type="Pfam" id="PF02773">
    <property type="entry name" value="S-AdoMet_synt_C"/>
    <property type="match status" value="1"/>
</dbReference>
<dbReference type="Pfam" id="PF02772">
    <property type="entry name" value="S-AdoMet_synt_M"/>
    <property type="match status" value="1"/>
</dbReference>
<dbReference type="Pfam" id="PF00438">
    <property type="entry name" value="S-AdoMet_synt_N"/>
    <property type="match status" value="1"/>
</dbReference>
<dbReference type="PIRSF" id="PIRSF000497">
    <property type="entry name" value="MAT"/>
    <property type="match status" value="1"/>
</dbReference>
<dbReference type="SUPFAM" id="SSF55973">
    <property type="entry name" value="S-adenosylmethionine synthetase"/>
    <property type="match status" value="3"/>
</dbReference>
<dbReference type="PROSITE" id="PS00376">
    <property type="entry name" value="ADOMET_SYNTHASE_1"/>
    <property type="match status" value="1"/>
</dbReference>
<dbReference type="PROSITE" id="PS00377">
    <property type="entry name" value="ADOMET_SYNTHASE_2"/>
    <property type="match status" value="1"/>
</dbReference>
<keyword id="KW-0067">ATP-binding</keyword>
<keyword id="KW-0963">Cytoplasm</keyword>
<keyword id="KW-0460">Magnesium</keyword>
<keyword id="KW-0479">Metal-binding</keyword>
<keyword id="KW-0547">Nucleotide-binding</keyword>
<keyword id="KW-0554">One-carbon metabolism</keyword>
<keyword id="KW-0630">Potassium</keyword>
<keyword id="KW-0808">Transferase</keyword>
<accession>A0KBF2</accession>
<name>METK_BURCH</name>
<protein>
    <recommendedName>
        <fullName evidence="1">S-adenosylmethionine synthase</fullName>
        <shortName evidence="1">AdoMet synthase</shortName>
        <ecNumber evidence="1">2.5.1.6</ecNumber>
    </recommendedName>
    <alternativeName>
        <fullName evidence="1">MAT</fullName>
    </alternativeName>
    <alternativeName>
        <fullName evidence="1">Methionine adenosyltransferase</fullName>
    </alternativeName>
</protein>
<reference key="1">
    <citation type="submission" date="2006-08" db="EMBL/GenBank/DDBJ databases">
        <title>Complete sequence of chromosome 1 of Burkholderia cenocepacia HI2424.</title>
        <authorList>
            <person name="Copeland A."/>
            <person name="Lucas S."/>
            <person name="Lapidus A."/>
            <person name="Barry K."/>
            <person name="Detter J.C."/>
            <person name="Glavina del Rio T."/>
            <person name="Hammon N."/>
            <person name="Israni S."/>
            <person name="Pitluck S."/>
            <person name="Chain P."/>
            <person name="Malfatti S."/>
            <person name="Shin M."/>
            <person name="Vergez L."/>
            <person name="Schmutz J."/>
            <person name="Larimer F."/>
            <person name="Land M."/>
            <person name="Hauser L."/>
            <person name="Kyrpides N."/>
            <person name="Kim E."/>
            <person name="LiPuma J.J."/>
            <person name="Gonzalez C.F."/>
            <person name="Konstantinidis K."/>
            <person name="Tiedje J.M."/>
            <person name="Richardson P."/>
        </authorList>
    </citation>
    <scope>NUCLEOTIDE SEQUENCE [LARGE SCALE GENOMIC DNA]</scope>
    <source>
        <strain>HI2424</strain>
    </source>
</reference>
<organism>
    <name type="scientific">Burkholderia cenocepacia (strain HI2424)</name>
    <dbReference type="NCBI Taxonomy" id="331272"/>
    <lineage>
        <taxon>Bacteria</taxon>
        <taxon>Pseudomonadati</taxon>
        <taxon>Pseudomonadota</taxon>
        <taxon>Betaproteobacteria</taxon>
        <taxon>Burkholderiales</taxon>
        <taxon>Burkholderiaceae</taxon>
        <taxon>Burkholderia</taxon>
        <taxon>Burkholderia cepacia complex</taxon>
    </lineage>
</organism>
<feature type="chain" id="PRO_0000302899" description="S-adenosylmethionine synthase">
    <location>
        <begin position="1"/>
        <end position="395"/>
    </location>
</feature>
<feature type="region of interest" description="Flexible loop" evidence="1">
    <location>
        <begin position="100"/>
        <end position="110"/>
    </location>
</feature>
<feature type="binding site" description="in other chain" evidence="1">
    <location>
        <position position="16"/>
    </location>
    <ligand>
        <name>ATP</name>
        <dbReference type="ChEBI" id="CHEBI:30616"/>
        <note>ligand shared between two neighboring subunits</note>
    </ligand>
</feature>
<feature type="binding site" evidence="1">
    <location>
        <position position="18"/>
    </location>
    <ligand>
        <name>Mg(2+)</name>
        <dbReference type="ChEBI" id="CHEBI:18420"/>
    </ligand>
</feature>
<feature type="binding site" evidence="1">
    <location>
        <position position="44"/>
    </location>
    <ligand>
        <name>K(+)</name>
        <dbReference type="ChEBI" id="CHEBI:29103"/>
    </ligand>
</feature>
<feature type="binding site" description="in other chain" evidence="1">
    <location>
        <position position="57"/>
    </location>
    <ligand>
        <name>L-methionine</name>
        <dbReference type="ChEBI" id="CHEBI:57844"/>
        <note>ligand shared between two neighboring subunits</note>
    </ligand>
</feature>
<feature type="binding site" description="in other chain" evidence="1">
    <location>
        <position position="100"/>
    </location>
    <ligand>
        <name>L-methionine</name>
        <dbReference type="ChEBI" id="CHEBI:57844"/>
        <note>ligand shared between two neighboring subunits</note>
    </ligand>
</feature>
<feature type="binding site" description="in other chain" evidence="1">
    <location>
        <begin position="167"/>
        <end position="169"/>
    </location>
    <ligand>
        <name>ATP</name>
        <dbReference type="ChEBI" id="CHEBI:30616"/>
        <note>ligand shared between two neighboring subunits</note>
    </ligand>
</feature>
<feature type="binding site" description="in other chain" evidence="1">
    <location>
        <begin position="233"/>
        <end position="234"/>
    </location>
    <ligand>
        <name>ATP</name>
        <dbReference type="ChEBI" id="CHEBI:30616"/>
        <note>ligand shared between two neighboring subunits</note>
    </ligand>
</feature>
<feature type="binding site" evidence="1">
    <location>
        <position position="242"/>
    </location>
    <ligand>
        <name>ATP</name>
        <dbReference type="ChEBI" id="CHEBI:30616"/>
        <note>ligand shared between two neighboring subunits</note>
    </ligand>
</feature>
<feature type="binding site" evidence="1">
    <location>
        <position position="242"/>
    </location>
    <ligand>
        <name>L-methionine</name>
        <dbReference type="ChEBI" id="CHEBI:57844"/>
        <note>ligand shared between two neighboring subunits</note>
    </ligand>
</feature>
<feature type="binding site" description="in other chain" evidence="1">
    <location>
        <begin position="248"/>
        <end position="249"/>
    </location>
    <ligand>
        <name>ATP</name>
        <dbReference type="ChEBI" id="CHEBI:30616"/>
        <note>ligand shared between two neighboring subunits</note>
    </ligand>
</feature>
<feature type="binding site" evidence="1">
    <location>
        <position position="265"/>
    </location>
    <ligand>
        <name>ATP</name>
        <dbReference type="ChEBI" id="CHEBI:30616"/>
        <note>ligand shared between two neighboring subunits</note>
    </ligand>
</feature>
<feature type="binding site" evidence="1">
    <location>
        <position position="269"/>
    </location>
    <ligand>
        <name>ATP</name>
        <dbReference type="ChEBI" id="CHEBI:30616"/>
        <note>ligand shared between two neighboring subunits</note>
    </ligand>
</feature>
<feature type="binding site" description="in other chain" evidence="1">
    <location>
        <position position="273"/>
    </location>
    <ligand>
        <name>L-methionine</name>
        <dbReference type="ChEBI" id="CHEBI:57844"/>
        <note>ligand shared between two neighboring subunits</note>
    </ligand>
</feature>
<comment type="function">
    <text evidence="1">Catalyzes the formation of S-adenosylmethionine (AdoMet) from methionine and ATP. The overall synthetic reaction is composed of two sequential steps, AdoMet formation and the subsequent tripolyphosphate hydrolysis which occurs prior to release of AdoMet from the enzyme.</text>
</comment>
<comment type="catalytic activity">
    <reaction evidence="1">
        <text>L-methionine + ATP + H2O = S-adenosyl-L-methionine + phosphate + diphosphate</text>
        <dbReference type="Rhea" id="RHEA:21080"/>
        <dbReference type="ChEBI" id="CHEBI:15377"/>
        <dbReference type="ChEBI" id="CHEBI:30616"/>
        <dbReference type="ChEBI" id="CHEBI:33019"/>
        <dbReference type="ChEBI" id="CHEBI:43474"/>
        <dbReference type="ChEBI" id="CHEBI:57844"/>
        <dbReference type="ChEBI" id="CHEBI:59789"/>
        <dbReference type="EC" id="2.5.1.6"/>
    </reaction>
</comment>
<comment type="cofactor">
    <cofactor evidence="1">
        <name>Mg(2+)</name>
        <dbReference type="ChEBI" id="CHEBI:18420"/>
    </cofactor>
    <text evidence="1">Binds 2 divalent ions per subunit.</text>
</comment>
<comment type="cofactor">
    <cofactor evidence="1">
        <name>K(+)</name>
        <dbReference type="ChEBI" id="CHEBI:29103"/>
    </cofactor>
    <text evidence="1">Binds 1 potassium ion per subunit.</text>
</comment>
<comment type="pathway">
    <text evidence="1">Amino-acid biosynthesis; S-adenosyl-L-methionine biosynthesis; S-adenosyl-L-methionine from L-methionine: step 1/1.</text>
</comment>
<comment type="subunit">
    <text evidence="1">Homotetramer; dimer of dimers.</text>
</comment>
<comment type="subcellular location">
    <subcellularLocation>
        <location evidence="1">Cytoplasm</location>
    </subcellularLocation>
</comment>
<comment type="similarity">
    <text evidence="1">Belongs to the AdoMet synthase family.</text>
</comment>
<sequence>MANDYLFTSESVSEGHPDKVADQISDAILDAILEQDKYSRVAAETLCNTGLVVLAGEITTTANIDYIQIARDTIKRIGYDNTDYGIDYKGCAVLVAYDKQSPDIAQGVDRAHDDNLDQGAGDQGLMFGYACDETPELMPLPIYLSHRLVERQASLRRDGRLQWLRPDAKSQVTVRYVDGKPDSIDTVVLSTQHAPDIELPALREAVIEEIIKPTLPAELIKGDIKFLVNPTGRFVIGGPQGDCGLTGRKIIVDTYGGAAPHGGGAFSGKDPSKVDRSAAYAGRYVAKNIVAAGLASRALIQVSYAIGVAEPTSVMVNTFGTGRVSDAVITKLVREHFDLRPKGIIKMLDLLRPIYEKTAAYGHFGREEPEFSWEATDKALALAEAAGVEPTARVA</sequence>
<evidence type="ECO:0000255" key="1">
    <source>
        <dbReference type="HAMAP-Rule" id="MF_00086"/>
    </source>
</evidence>